<accession>Q118P4</accession>
<protein>
    <recommendedName>
        <fullName evidence="1">Trigger factor</fullName>
        <shortName evidence="1">TF</shortName>
        <ecNumber evidence="1">5.2.1.8</ecNumber>
    </recommendedName>
    <alternativeName>
        <fullName evidence="1">PPIase</fullName>
    </alternativeName>
</protein>
<feature type="chain" id="PRO_1000022778" description="Trigger factor">
    <location>
        <begin position="1"/>
        <end position="485"/>
    </location>
</feature>
<feature type="domain" description="PPIase FKBP-type" evidence="1">
    <location>
        <begin position="169"/>
        <end position="261"/>
    </location>
</feature>
<comment type="function">
    <text evidence="1">Involved in protein export. Acts as a chaperone by maintaining the newly synthesized protein in an open conformation. Functions as a peptidyl-prolyl cis-trans isomerase.</text>
</comment>
<comment type="catalytic activity">
    <reaction evidence="1">
        <text>[protein]-peptidylproline (omega=180) = [protein]-peptidylproline (omega=0)</text>
        <dbReference type="Rhea" id="RHEA:16237"/>
        <dbReference type="Rhea" id="RHEA-COMP:10747"/>
        <dbReference type="Rhea" id="RHEA-COMP:10748"/>
        <dbReference type="ChEBI" id="CHEBI:83833"/>
        <dbReference type="ChEBI" id="CHEBI:83834"/>
        <dbReference type="EC" id="5.2.1.8"/>
    </reaction>
</comment>
<comment type="subcellular location">
    <subcellularLocation>
        <location>Cytoplasm</location>
    </subcellularLocation>
    <text evidence="1">About half TF is bound to the ribosome near the polypeptide exit tunnel while the other half is free in the cytoplasm.</text>
</comment>
<comment type="domain">
    <text evidence="1">Consists of 3 domains; the N-terminus binds the ribosome, the middle domain has PPIase activity, while the C-terminus has intrinsic chaperone activity on its own.</text>
</comment>
<comment type="similarity">
    <text evidence="1">Belongs to the FKBP-type PPIase family. Tig subfamily.</text>
</comment>
<proteinExistence type="inferred from homology"/>
<keyword id="KW-0131">Cell cycle</keyword>
<keyword id="KW-0132">Cell division</keyword>
<keyword id="KW-0143">Chaperone</keyword>
<keyword id="KW-0963">Cytoplasm</keyword>
<keyword id="KW-0413">Isomerase</keyword>
<keyword id="KW-0697">Rotamase</keyword>
<organism>
    <name type="scientific">Trichodesmium erythraeum (strain IMS101)</name>
    <dbReference type="NCBI Taxonomy" id="203124"/>
    <lineage>
        <taxon>Bacteria</taxon>
        <taxon>Bacillati</taxon>
        <taxon>Cyanobacteriota</taxon>
        <taxon>Cyanophyceae</taxon>
        <taxon>Oscillatoriophycideae</taxon>
        <taxon>Oscillatoriales</taxon>
        <taxon>Microcoleaceae</taxon>
        <taxon>Trichodesmium</taxon>
    </lineage>
</organism>
<gene>
    <name evidence="1" type="primary">tig</name>
    <name type="ordered locus">Tery_0586</name>
</gene>
<sequence>MKVTQEKLPASQISLEIEISPEMSKNAYEQIIKKYIRSANIPGFRKGKVPRNILIQRLGKNYIKAMALDDLINNCLEKAREQESIKAIGQFELKTEFEELVKDFEPGKEMAFSAKVDVEPEAKVEDYKGFLVQAEEAKYDSALVDEFLEERRSRMGTLIPIEGRAAEMGDVAIVDFVGIIPSETEGEEAQEVPGGKAQDFQMDLKEGQFIPGFIEGIVGMKLQETKEISAQFPSEYSEANLAGKPVVFTVTLKELKEKELPELDDDLAQEISEFETIDKLREFLEQKFTKEKEEKTKQNKEKAIIDELVTHLEVEIPETLIKNEVQQMLAQSAMDLSQYGIDVKEFFSSEKLPEMQERTRPEAIERLKRDLVIATVAKRESITVDEEEIKAESQKVVKQLKEKDFDSDRLRQVVTQELLKEKTIKWLEANGTVELVPEGTLHTESQTPQTTEILETEVESEIPQASETIVEVKAEEVATVENSQE</sequence>
<dbReference type="EC" id="5.2.1.8" evidence="1"/>
<dbReference type="EMBL" id="CP000393">
    <property type="protein sequence ID" value="ABG50030.1"/>
    <property type="molecule type" value="Genomic_DNA"/>
</dbReference>
<dbReference type="RefSeq" id="WP_011610424.1">
    <property type="nucleotide sequence ID" value="NC_008312.1"/>
</dbReference>
<dbReference type="SMR" id="Q118P4"/>
<dbReference type="STRING" id="203124.Tery_0586"/>
<dbReference type="KEGG" id="ter:Tery_0586"/>
<dbReference type="eggNOG" id="COG0544">
    <property type="taxonomic scope" value="Bacteria"/>
</dbReference>
<dbReference type="HOGENOM" id="CLU_033058_3_1_3"/>
<dbReference type="OrthoDB" id="9767721at2"/>
<dbReference type="GO" id="GO:0005737">
    <property type="term" value="C:cytoplasm"/>
    <property type="evidence" value="ECO:0007669"/>
    <property type="project" value="UniProtKB-SubCell"/>
</dbReference>
<dbReference type="GO" id="GO:0003755">
    <property type="term" value="F:peptidyl-prolyl cis-trans isomerase activity"/>
    <property type="evidence" value="ECO:0007669"/>
    <property type="project" value="UniProtKB-UniRule"/>
</dbReference>
<dbReference type="GO" id="GO:0044183">
    <property type="term" value="F:protein folding chaperone"/>
    <property type="evidence" value="ECO:0007669"/>
    <property type="project" value="TreeGrafter"/>
</dbReference>
<dbReference type="GO" id="GO:0043022">
    <property type="term" value="F:ribosome binding"/>
    <property type="evidence" value="ECO:0007669"/>
    <property type="project" value="TreeGrafter"/>
</dbReference>
<dbReference type="GO" id="GO:0051083">
    <property type="term" value="P:'de novo' cotranslational protein folding"/>
    <property type="evidence" value="ECO:0007669"/>
    <property type="project" value="TreeGrafter"/>
</dbReference>
<dbReference type="GO" id="GO:0051301">
    <property type="term" value="P:cell division"/>
    <property type="evidence" value="ECO:0007669"/>
    <property type="project" value="UniProtKB-KW"/>
</dbReference>
<dbReference type="GO" id="GO:0061077">
    <property type="term" value="P:chaperone-mediated protein folding"/>
    <property type="evidence" value="ECO:0007669"/>
    <property type="project" value="TreeGrafter"/>
</dbReference>
<dbReference type="GO" id="GO:0015031">
    <property type="term" value="P:protein transport"/>
    <property type="evidence" value="ECO:0007669"/>
    <property type="project" value="UniProtKB-UniRule"/>
</dbReference>
<dbReference type="GO" id="GO:0043335">
    <property type="term" value="P:protein unfolding"/>
    <property type="evidence" value="ECO:0007669"/>
    <property type="project" value="TreeGrafter"/>
</dbReference>
<dbReference type="FunFam" id="3.10.50.40:FF:000001">
    <property type="entry name" value="Trigger factor"/>
    <property type="match status" value="1"/>
</dbReference>
<dbReference type="FunFam" id="3.30.70.1050:FF:000004">
    <property type="entry name" value="Trigger factor"/>
    <property type="match status" value="1"/>
</dbReference>
<dbReference type="Gene3D" id="3.10.50.40">
    <property type="match status" value="1"/>
</dbReference>
<dbReference type="Gene3D" id="3.30.70.1050">
    <property type="entry name" value="Trigger factor ribosome-binding domain"/>
    <property type="match status" value="1"/>
</dbReference>
<dbReference type="Gene3D" id="1.10.3120.10">
    <property type="entry name" value="Trigger factor, C-terminal domain"/>
    <property type="match status" value="1"/>
</dbReference>
<dbReference type="HAMAP" id="MF_00303">
    <property type="entry name" value="Trigger_factor_Tig"/>
    <property type="match status" value="1"/>
</dbReference>
<dbReference type="InterPro" id="IPR046357">
    <property type="entry name" value="PPIase_dom_sf"/>
</dbReference>
<dbReference type="InterPro" id="IPR001179">
    <property type="entry name" value="PPIase_FKBP_dom"/>
</dbReference>
<dbReference type="InterPro" id="IPR005215">
    <property type="entry name" value="Trig_fac"/>
</dbReference>
<dbReference type="InterPro" id="IPR008880">
    <property type="entry name" value="Trigger_fac_C"/>
</dbReference>
<dbReference type="InterPro" id="IPR037041">
    <property type="entry name" value="Trigger_fac_C_sf"/>
</dbReference>
<dbReference type="InterPro" id="IPR008881">
    <property type="entry name" value="Trigger_fac_ribosome-bd_bac"/>
</dbReference>
<dbReference type="InterPro" id="IPR036611">
    <property type="entry name" value="Trigger_fac_ribosome-bd_sf"/>
</dbReference>
<dbReference type="InterPro" id="IPR027304">
    <property type="entry name" value="Trigger_fact/SurA_dom_sf"/>
</dbReference>
<dbReference type="NCBIfam" id="TIGR00115">
    <property type="entry name" value="tig"/>
    <property type="match status" value="1"/>
</dbReference>
<dbReference type="PANTHER" id="PTHR30560">
    <property type="entry name" value="TRIGGER FACTOR CHAPERONE AND PEPTIDYL-PROLYL CIS/TRANS ISOMERASE"/>
    <property type="match status" value="1"/>
</dbReference>
<dbReference type="PANTHER" id="PTHR30560:SF3">
    <property type="entry name" value="TRIGGER FACTOR-LIKE PROTEIN TIG, CHLOROPLASTIC"/>
    <property type="match status" value="1"/>
</dbReference>
<dbReference type="Pfam" id="PF00254">
    <property type="entry name" value="FKBP_C"/>
    <property type="match status" value="1"/>
</dbReference>
<dbReference type="Pfam" id="PF05698">
    <property type="entry name" value="Trigger_C"/>
    <property type="match status" value="1"/>
</dbReference>
<dbReference type="Pfam" id="PF05697">
    <property type="entry name" value="Trigger_N"/>
    <property type="match status" value="1"/>
</dbReference>
<dbReference type="PIRSF" id="PIRSF003095">
    <property type="entry name" value="Trigger_factor"/>
    <property type="match status" value="1"/>
</dbReference>
<dbReference type="SUPFAM" id="SSF54534">
    <property type="entry name" value="FKBP-like"/>
    <property type="match status" value="1"/>
</dbReference>
<dbReference type="SUPFAM" id="SSF109998">
    <property type="entry name" value="Triger factor/SurA peptide-binding domain-like"/>
    <property type="match status" value="1"/>
</dbReference>
<dbReference type="SUPFAM" id="SSF102735">
    <property type="entry name" value="Trigger factor ribosome-binding domain"/>
    <property type="match status" value="1"/>
</dbReference>
<dbReference type="PROSITE" id="PS50059">
    <property type="entry name" value="FKBP_PPIASE"/>
    <property type="match status" value="1"/>
</dbReference>
<reference key="1">
    <citation type="journal article" date="2015" name="Proc. Natl. Acad. Sci. U.S.A.">
        <title>Trichodesmium genome maintains abundant, widespread noncoding DNA in situ, despite oligotrophic lifestyle.</title>
        <authorList>
            <person name="Walworth N."/>
            <person name="Pfreundt U."/>
            <person name="Nelson W.C."/>
            <person name="Mincer T."/>
            <person name="Heidelberg J.F."/>
            <person name="Fu F."/>
            <person name="Waterbury J.B."/>
            <person name="Glavina del Rio T."/>
            <person name="Goodwin L."/>
            <person name="Kyrpides N.C."/>
            <person name="Land M.L."/>
            <person name="Woyke T."/>
            <person name="Hutchins D.A."/>
            <person name="Hess W.R."/>
            <person name="Webb E.A."/>
        </authorList>
    </citation>
    <scope>NUCLEOTIDE SEQUENCE [LARGE SCALE GENOMIC DNA]</scope>
    <source>
        <strain>IMS101</strain>
    </source>
</reference>
<name>TIG_TRIEI</name>
<evidence type="ECO:0000255" key="1">
    <source>
        <dbReference type="HAMAP-Rule" id="MF_00303"/>
    </source>
</evidence>